<evidence type="ECO:0000255" key="1">
    <source>
        <dbReference type="HAMAP-Rule" id="MF_00736"/>
    </source>
</evidence>
<evidence type="ECO:0000305" key="2"/>
<sequence>MAKKVAGQLKLQVPAGAANPSPPIGPALGQRGINIMEFCKAFNAASQEMEKGSPIPVLITYYQDKSFTFVMKTPPVTYFLKKAANLKSGSKTPGKASAGTITRDKVRAIAEAKMKDLNAADVEAAMRMIEGSARSMGLEVVG</sequence>
<accession>B0CH45</accession>
<reference key="1">
    <citation type="submission" date="2007-12" db="EMBL/GenBank/DDBJ databases">
        <title>Brucella suis ATCC 23445 whole genome shotgun sequencing project.</title>
        <authorList>
            <person name="Setubal J.C."/>
            <person name="Bowns C."/>
            <person name="Boyle S."/>
            <person name="Crasta O.R."/>
            <person name="Czar M.J."/>
            <person name="Dharmanolla C."/>
            <person name="Gillespie J.J."/>
            <person name="Kenyon R.W."/>
            <person name="Lu J."/>
            <person name="Mane S."/>
            <person name="Mohapatra S."/>
            <person name="Nagrani S."/>
            <person name="Purkayastha A."/>
            <person name="Rajasimha H.K."/>
            <person name="Shallom J.M."/>
            <person name="Shallom S."/>
            <person name="Shukla M."/>
            <person name="Snyder E.E."/>
            <person name="Sobral B.W."/>
            <person name="Wattam A.R."/>
            <person name="Will R."/>
            <person name="Williams K."/>
            <person name="Yoo H."/>
            <person name="Bruce D."/>
            <person name="Detter C."/>
            <person name="Munk C."/>
            <person name="Brettin T.S."/>
        </authorList>
    </citation>
    <scope>NUCLEOTIDE SEQUENCE [LARGE SCALE GENOMIC DNA]</scope>
    <source>
        <strain>ATCC 23445 / NCTC 10510</strain>
    </source>
</reference>
<comment type="function">
    <text evidence="1">Forms part of the ribosomal stalk which helps the ribosome interact with GTP-bound translation factors.</text>
</comment>
<comment type="subunit">
    <text evidence="1">Part of the ribosomal stalk of the 50S ribosomal subunit. Interacts with L10 and the large rRNA to form the base of the stalk. L10 forms an elongated spine to which L12 dimers bind in a sequential fashion forming a multimeric L10(L12)X complex.</text>
</comment>
<comment type="PTM">
    <text evidence="1">One or more lysine residues are methylated.</text>
</comment>
<comment type="similarity">
    <text evidence="1">Belongs to the universal ribosomal protein uL11 family.</text>
</comment>
<keyword id="KW-0488">Methylation</keyword>
<keyword id="KW-0687">Ribonucleoprotein</keyword>
<keyword id="KW-0689">Ribosomal protein</keyword>
<keyword id="KW-0694">RNA-binding</keyword>
<keyword id="KW-0699">rRNA-binding</keyword>
<protein>
    <recommendedName>
        <fullName evidence="1">Large ribosomal subunit protein uL11</fullName>
    </recommendedName>
    <alternativeName>
        <fullName evidence="2">50S ribosomal protein L11</fullName>
    </alternativeName>
</protein>
<name>RL11_BRUSI</name>
<gene>
    <name evidence="1" type="primary">rplK</name>
    <name type="ordered locus">BSUIS_A1295</name>
</gene>
<proteinExistence type="inferred from homology"/>
<dbReference type="EMBL" id="CP000911">
    <property type="protein sequence ID" value="ABY38346.1"/>
    <property type="molecule type" value="Genomic_DNA"/>
</dbReference>
<dbReference type="RefSeq" id="WP_002964374.1">
    <property type="nucleotide sequence ID" value="NC_010169.1"/>
</dbReference>
<dbReference type="SMR" id="B0CH45"/>
<dbReference type="GeneID" id="97533513"/>
<dbReference type="KEGG" id="bmt:BSUIS_A1295"/>
<dbReference type="HOGENOM" id="CLU_074237_2_0_5"/>
<dbReference type="Proteomes" id="UP000008545">
    <property type="component" value="Chromosome I"/>
</dbReference>
<dbReference type="GO" id="GO:0022625">
    <property type="term" value="C:cytosolic large ribosomal subunit"/>
    <property type="evidence" value="ECO:0007669"/>
    <property type="project" value="TreeGrafter"/>
</dbReference>
<dbReference type="GO" id="GO:0070180">
    <property type="term" value="F:large ribosomal subunit rRNA binding"/>
    <property type="evidence" value="ECO:0007669"/>
    <property type="project" value="UniProtKB-UniRule"/>
</dbReference>
<dbReference type="GO" id="GO:0003735">
    <property type="term" value="F:structural constituent of ribosome"/>
    <property type="evidence" value="ECO:0007669"/>
    <property type="project" value="InterPro"/>
</dbReference>
<dbReference type="GO" id="GO:0006412">
    <property type="term" value="P:translation"/>
    <property type="evidence" value="ECO:0007669"/>
    <property type="project" value="UniProtKB-UniRule"/>
</dbReference>
<dbReference type="CDD" id="cd00349">
    <property type="entry name" value="Ribosomal_L11"/>
    <property type="match status" value="1"/>
</dbReference>
<dbReference type="FunFam" id="1.10.10.250:FF:000001">
    <property type="entry name" value="50S ribosomal protein L11"/>
    <property type="match status" value="1"/>
</dbReference>
<dbReference type="FunFam" id="3.30.1550.10:FF:000001">
    <property type="entry name" value="50S ribosomal protein L11"/>
    <property type="match status" value="1"/>
</dbReference>
<dbReference type="Gene3D" id="1.10.10.250">
    <property type="entry name" value="Ribosomal protein L11, C-terminal domain"/>
    <property type="match status" value="1"/>
</dbReference>
<dbReference type="Gene3D" id="3.30.1550.10">
    <property type="entry name" value="Ribosomal protein L11/L12, N-terminal domain"/>
    <property type="match status" value="1"/>
</dbReference>
<dbReference type="HAMAP" id="MF_00736">
    <property type="entry name" value="Ribosomal_uL11"/>
    <property type="match status" value="1"/>
</dbReference>
<dbReference type="InterPro" id="IPR000911">
    <property type="entry name" value="Ribosomal_uL11"/>
</dbReference>
<dbReference type="InterPro" id="IPR006519">
    <property type="entry name" value="Ribosomal_uL11_bac-typ"/>
</dbReference>
<dbReference type="InterPro" id="IPR020783">
    <property type="entry name" value="Ribosomal_uL11_C"/>
</dbReference>
<dbReference type="InterPro" id="IPR036769">
    <property type="entry name" value="Ribosomal_uL11_C_sf"/>
</dbReference>
<dbReference type="InterPro" id="IPR020785">
    <property type="entry name" value="Ribosomal_uL11_CS"/>
</dbReference>
<dbReference type="InterPro" id="IPR020784">
    <property type="entry name" value="Ribosomal_uL11_N"/>
</dbReference>
<dbReference type="InterPro" id="IPR036796">
    <property type="entry name" value="Ribosomal_uL11_N_sf"/>
</dbReference>
<dbReference type="NCBIfam" id="TIGR01632">
    <property type="entry name" value="L11_bact"/>
    <property type="match status" value="1"/>
</dbReference>
<dbReference type="PANTHER" id="PTHR11661">
    <property type="entry name" value="60S RIBOSOMAL PROTEIN L12"/>
    <property type="match status" value="1"/>
</dbReference>
<dbReference type="PANTHER" id="PTHR11661:SF1">
    <property type="entry name" value="LARGE RIBOSOMAL SUBUNIT PROTEIN UL11M"/>
    <property type="match status" value="1"/>
</dbReference>
<dbReference type="Pfam" id="PF00298">
    <property type="entry name" value="Ribosomal_L11"/>
    <property type="match status" value="1"/>
</dbReference>
<dbReference type="Pfam" id="PF03946">
    <property type="entry name" value="Ribosomal_L11_N"/>
    <property type="match status" value="1"/>
</dbReference>
<dbReference type="SMART" id="SM00649">
    <property type="entry name" value="RL11"/>
    <property type="match status" value="1"/>
</dbReference>
<dbReference type="SUPFAM" id="SSF54747">
    <property type="entry name" value="Ribosomal L11/L12e N-terminal domain"/>
    <property type="match status" value="1"/>
</dbReference>
<dbReference type="SUPFAM" id="SSF46906">
    <property type="entry name" value="Ribosomal protein L11, C-terminal domain"/>
    <property type="match status" value="1"/>
</dbReference>
<dbReference type="PROSITE" id="PS00359">
    <property type="entry name" value="RIBOSOMAL_L11"/>
    <property type="match status" value="1"/>
</dbReference>
<feature type="chain" id="PRO_1000083370" description="Large ribosomal subunit protein uL11">
    <location>
        <begin position="1"/>
        <end position="142"/>
    </location>
</feature>
<organism>
    <name type="scientific">Brucella suis (strain ATCC 23445 / NCTC 10510)</name>
    <dbReference type="NCBI Taxonomy" id="470137"/>
    <lineage>
        <taxon>Bacteria</taxon>
        <taxon>Pseudomonadati</taxon>
        <taxon>Pseudomonadota</taxon>
        <taxon>Alphaproteobacteria</taxon>
        <taxon>Hyphomicrobiales</taxon>
        <taxon>Brucellaceae</taxon>
        <taxon>Brucella/Ochrobactrum group</taxon>
        <taxon>Brucella</taxon>
    </lineage>
</organism>